<name>RNFH_KLEP3</name>
<organism>
    <name type="scientific">Klebsiella pneumoniae (strain 342)</name>
    <dbReference type="NCBI Taxonomy" id="507522"/>
    <lineage>
        <taxon>Bacteria</taxon>
        <taxon>Pseudomonadati</taxon>
        <taxon>Pseudomonadota</taxon>
        <taxon>Gammaproteobacteria</taxon>
        <taxon>Enterobacterales</taxon>
        <taxon>Enterobacteriaceae</taxon>
        <taxon>Klebsiella/Raoultella group</taxon>
        <taxon>Klebsiella</taxon>
        <taxon>Klebsiella pneumoniae complex</taxon>
    </lineage>
</organism>
<feature type="chain" id="PRO_1000200185" description="Protein RnfH">
    <location>
        <begin position="1"/>
        <end position="96"/>
    </location>
</feature>
<evidence type="ECO:0000255" key="1">
    <source>
        <dbReference type="HAMAP-Rule" id="MF_00460"/>
    </source>
</evidence>
<protein>
    <recommendedName>
        <fullName evidence="1">Protein RnfH</fullName>
    </recommendedName>
</protein>
<accession>B5XVJ5</accession>
<dbReference type="EMBL" id="CP000964">
    <property type="protein sequence ID" value="ACI11433.1"/>
    <property type="molecule type" value="Genomic_DNA"/>
</dbReference>
<dbReference type="SMR" id="B5XVJ5"/>
<dbReference type="KEGG" id="kpe:KPK_1180"/>
<dbReference type="HOGENOM" id="CLU_150721_1_0_6"/>
<dbReference type="Proteomes" id="UP000001734">
    <property type="component" value="Chromosome"/>
</dbReference>
<dbReference type="Gene3D" id="3.10.20.280">
    <property type="entry name" value="RnfH-like"/>
    <property type="match status" value="1"/>
</dbReference>
<dbReference type="HAMAP" id="MF_00460">
    <property type="entry name" value="UPF0125_RnfH"/>
    <property type="match status" value="1"/>
</dbReference>
<dbReference type="InterPro" id="IPR016155">
    <property type="entry name" value="Mopterin_synth/thiamin_S_b"/>
</dbReference>
<dbReference type="InterPro" id="IPR005346">
    <property type="entry name" value="RnfH"/>
</dbReference>
<dbReference type="InterPro" id="IPR037021">
    <property type="entry name" value="RnfH_sf"/>
</dbReference>
<dbReference type="NCBIfam" id="NF002490">
    <property type="entry name" value="PRK01777.1"/>
    <property type="match status" value="1"/>
</dbReference>
<dbReference type="PANTHER" id="PTHR37483">
    <property type="entry name" value="UPF0125 PROTEIN RATB"/>
    <property type="match status" value="1"/>
</dbReference>
<dbReference type="PANTHER" id="PTHR37483:SF1">
    <property type="entry name" value="UPF0125 PROTEIN RATB"/>
    <property type="match status" value="1"/>
</dbReference>
<dbReference type="Pfam" id="PF03658">
    <property type="entry name" value="Ub-RnfH"/>
    <property type="match status" value="1"/>
</dbReference>
<dbReference type="SUPFAM" id="SSF54285">
    <property type="entry name" value="MoaD/ThiS"/>
    <property type="match status" value="1"/>
</dbReference>
<proteinExistence type="inferred from homology"/>
<reference key="1">
    <citation type="journal article" date="2008" name="PLoS Genet.">
        <title>Complete genome sequence of the N2-fixing broad host range endophyte Klebsiella pneumoniae 342 and virulence predictions verified in mice.</title>
        <authorList>
            <person name="Fouts D.E."/>
            <person name="Tyler H.L."/>
            <person name="DeBoy R.T."/>
            <person name="Daugherty S."/>
            <person name="Ren Q."/>
            <person name="Badger J.H."/>
            <person name="Durkin A.S."/>
            <person name="Huot H."/>
            <person name="Shrivastava S."/>
            <person name="Kothari S."/>
            <person name="Dodson R.J."/>
            <person name="Mohamoud Y."/>
            <person name="Khouri H."/>
            <person name="Roesch L.F.W."/>
            <person name="Krogfelt K.A."/>
            <person name="Struve C."/>
            <person name="Triplett E.W."/>
            <person name="Methe B.A."/>
        </authorList>
    </citation>
    <scope>NUCLEOTIDE SEQUENCE [LARGE SCALE GENOMIC DNA]</scope>
    <source>
        <strain>342</strain>
    </source>
</reference>
<sequence length="96" mass="10834">MPANIRVEVAYALPEKQYLQRVTLDEGATVEQAIIASGLLALRDDIDLAKNKLGIYSRPVKLHDEVHDGDRVEIYRPLIADPKELRRQRAEKSAAK</sequence>
<gene>
    <name evidence="1" type="primary">rnfH</name>
    <name type="ordered locus">KPK_1180</name>
</gene>
<comment type="similarity">
    <text evidence="1">Belongs to the UPF0125 (RnfH) family.</text>
</comment>